<dbReference type="EMBL" id="CP001215">
    <property type="protein sequence ID" value="ACP15342.1"/>
    <property type="molecule type" value="Genomic_DNA"/>
</dbReference>
<dbReference type="RefSeq" id="WP_001229392.1">
    <property type="nucleotide sequence ID" value="NC_012581.1"/>
</dbReference>
<dbReference type="SMR" id="C3L7B9"/>
<dbReference type="GeneID" id="93007304"/>
<dbReference type="KEGG" id="bah:BAMEG_0686"/>
<dbReference type="HOGENOM" id="CLU_148518_0_0_9"/>
<dbReference type="GO" id="GO:0022627">
    <property type="term" value="C:cytosolic small ribosomal subunit"/>
    <property type="evidence" value="ECO:0007669"/>
    <property type="project" value="TreeGrafter"/>
</dbReference>
<dbReference type="GO" id="GO:0019843">
    <property type="term" value="F:rRNA binding"/>
    <property type="evidence" value="ECO:0007669"/>
    <property type="project" value="UniProtKB-UniRule"/>
</dbReference>
<dbReference type="GO" id="GO:0003735">
    <property type="term" value="F:structural constituent of ribosome"/>
    <property type="evidence" value="ECO:0007669"/>
    <property type="project" value="InterPro"/>
</dbReference>
<dbReference type="GO" id="GO:0006412">
    <property type="term" value="P:translation"/>
    <property type="evidence" value="ECO:0007669"/>
    <property type="project" value="UniProtKB-UniRule"/>
</dbReference>
<dbReference type="CDD" id="cd00353">
    <property type="entry name" value="Ribosomal_S15p_S13e"/>
    <property type="match status" value="1"/>
</dbReference>
<dbReference type="FunFam" id="1.10.287.10:FF:000002">
    <property type="entry name" value="30S ribosomal protein S15"/>
    <property type="match status" value="1"/>
</dbReference>
<dbReference type="Gene3D" id="6.10.250.3130">
    <property type="match status" value="1"/>
</dbReference>
<dbReference type="Gene3D" id="1.10.287.10">
    <property type="entry name" value="S15/NS1, RNA-binding"/>
    <property type="match status" value="1"/>
</dbReference>
<dbReference type="HAMAP" id="MF_01343_B">
    <property type="entry name" value="Ribosomal_uS15_B"/>
    <property type="match status" value="1"/>
</dbReference>
<dbReference type="InterPro" id="IPR000589">
    <property type="entry name" value="Ribosomal_uS15"/>
</dbReference>
<dbReference type="InterPro" id="IPR005290">
    <property type="entry name" value="Ribosomal_uS15_bac-type"/>
</dbReference>
<dbReference type="InterPro" id="IPR009068">
    <property type="entry name" value="uS15_NS1_RNA-bd_sf"/>
</dbReference>
<dbReference type="NCBIfam" id="TIGR00952">
    <property type="entry name" value="S15_bact"/>
    <property type="match status" value="1"/>
</dbReference>
<dbReference type="PANTHER" id="PTHR23321">
    <property type="entry name" value="RIBOSOMAL PROTEIN S15, BACTERIAL AND ORGANELLAR"/>
    <property type="match status" value="1"/>
</dbReference>
<dbReference type="PANTHER" id="PTHR23321:SF26">
    <property type="entry name" value="SMALL RIBOSOMAL SUBUNIT PROTEIN US15M"/>
    <property type="match status" value="1"/>
</dbReference>
<dbReference type="Pfam" id="PF00312">
    <property type="entry name" value="Ribosomal_S15"/>
    <property type="match status" value="1"/>
</dbReference>
<dbReference type="SMART" id="SM01387">
    <property type="entry name" value="Ribosomal_S15"/>
    <property type="match status" value="1"/>
</dbReference>
<dbReference type="SUPFAM" id="SSF47060">
    <property type="entry name" value="S15/NS1 RNA-binding domain"/>
    <property type="match status" value="1"/>
</dbReference>
<dbReference type="PROSITE" id="PS00362">
    <property type="entry name" value="RIBOSOMAL_S15"/>
    <property type="match status" value="1"/>
</dbReference>
<organism>
    <name type="scientific">Bacillus anthracis (strain CDC 684 / NRRL 3495)</name>
    <dbReference type="NCBI Taxonomy" id="568206"/>
    <lineage>
        <taxon>Bacteria</taxon>
        <taxon>Bacillati</taxon>
        <taxon>Bacillota</taxon>
        <taxon>Bacilli</taxon>
        <taxon>Bacillales</taxon>
        <taxon>Bacillaceae</taxon>
        <taxon>Bacillus</taxon>
        <taxon>Bacillus cereus group</taxon>
    </lineage>
</organism>
<accession>C3L7B9</accession>
<protein>
    <recommendedName>
        <fullName evidence="1">Small ribosomal subunit protein uS15</fullName>
    </recommendedName>
    <alternativeName>
        <fullName evidence="2">30S ribosomal protein S15</fullName>
    </alternativeName>
</protein>
<feature type="chain" id="PRO_1000166399" description="Small ribosomal subunit protein uS15">
    <location>
        <begin position="1"/>
        <end position="89"/>
    </location>
</feature>
<comment type="function">
    <text evidence="1">One of the primary rRNA binding proteins, it binds directly to 16S rRNA where it helps nucleate assembly of the platform of the 30S subunit by binding and bridging several RNA helices of the 16S rRNA.</text>
</comment>
<comment type="function">
    <text evidence="1">Forms an intersubunit bridge (bridge B4) with the 23S rRNA of the 50S subunit in the ribosome.</text>
</comment>
<comment type="subunit">
    <text evidence="1">Part of the 30S ribosomal subunit. Forms a bridge to the 50S subunit in the 70S ribosome, contacting the 23S rRNA.</text>
</comment>
<comment type="similarity">
    <text evidence="1">Belongs to the universal ribosomal protein uS15 family.</text>
</comment>
<keyword id="KW-0687">Ribonucleoprotein</keyword>
<keyword id="KW-0689">Ribosomal protein</keyword>
<keyword id="KW-0694">RNA-binding</keyword>
<keyword id="KW-0699">rRNA-binding</keyword>
<evidence type="ECO:0000255" key="1">
    <source>
        <dbReference type="HAMAP-Rule" id="MF_01343"/>
    </source>
</evidence>
<evidence type="ECO:0000305" key="2"/>
<gene>
    <name evidence="1" type="primary">rpsO</name>
    <name type="ordered locus">BAMEG_0686</name>
</gene>
<proteinExistence type="inferred from homology"/>
<sequence length="89" mass="10560">MALTQERKNEIIAQFRTHETDTGSPEVQIAVLTEQINTLNEHLRTHKKDHHSRRGLLKMVGKRRNLLTYLRNSDITRYRELITKLGLRR</sequence>
<reference key="1">
    <citation type="submission" date="2008-10" db="EMBL/GenBank/DDBJ databases">
        <title>Genome sequence of Bacillus anthracis str. CDC 684.</title>
        <authorList>
            <person name="Dodson R.J."/>
            <person name="Munk A.C."/>
            <person name="Brettin T."/>
            <person name="Bruce D."/>
            <person name="Detter C."/>
            <person name="Tapia R."/>
            <person name="Han C."/>
            <person name="Sutton G."/>
            <person name="Sims D."/>
        </authorList>
    </citation>
    <scope>NUCLEOTIDE SEQUENCE [LARGE SCALE GENOMIC DNA]</scope>
    <source>
        <strain>CDC 684 / NRRL 3495</strain>
    </source>
</reference>
<name>RS15_BACAC</name>